<reference key="1">
    <citation type="journal article" date="2004" name="Genome Res.">
        <title>The status, quality, and expansion of the NIH full-length cDNA project: the Mammalian Gene Collection (MGC).</title>
        <authorList>
            <consortium name="The MGC Project Team"/>
        </authorList>
    </citation>
    <scope>NUCLEOTIDE SEQUENCE [LARGE SCALE MRNA]</scope>
    <source>
        <tissue>Prostate</tissue>
    </source>
</reference>
<proteinExistence type="evidence at transcript level"/>
<comment type="function">
    <text evidence="2">Serine protease inhibitor, which acrs as a regulator of the classical complement pathway. Forms a proteolytically inactive stoichiometric complex with the C1r or C1s proteases. May also regulate blood coagulation, fibrinolysis and the generation of kinins. Very efficient inhibitor of FXIIa. Inhibits chymotrypsin and kallikrein.</text>
</comment>
<comment type="subunit">
    <text evidence="2">Interacts with MASP1.</text>
</comment>
<comment type="subcellular location">
    <subcellularLocation>
        <location evidence="2">Secreted</location>
    </subcellularLocation>
</comment>
<comment type="similarity">
    <text evidence="5">Belongs to the serpin family.</text>
</comment>
<gene>
    <name type="primary">Serping1</name>
</gene>
<sequence>MASKLTPLTLLLLLLAGDRAFSDSEVTSHSSQDPLVVQEGSRDSVPERDGSRSPIEHTGQSSTWPTTSGSTKISNDTMDQVANESFIQHVQPAAQLPEDSPSQSPVNSSSPPSTASAPPTQAPTEPLCPEPLAWCSDSDRDSSEATLSEALTDFSVKLYHAFSATKKAETNMAFSPFSIASLLTQVLLGAGDSTKSNLEDILSYPKDFACVHQTLKAFSSKGVTSVSQIFHSPDLAIRDTYVNASLSLYGSSPRVLGPDGDANLKLINTWVAENTNHKINELLDSLPSDTRLVLLNAVYLSAKWKKTFEQKKMMASFLYKNSMIKVPMLSSKKYPLALFNDQTLKAKVGQLQLSHNLSFVIMVPQSPTHQLEDMEKALNPTVFKAILKKLELSKFQPTYVMMPRIKVKSSQDMLSIMEKLEFFDFTYDLNLCGLTEDPDLQVSSMKHETVLELTETGVEAAAASTISVARNLLIFEVQQPFLFLLWDQRHKFPVFMGRVYDPRA</sequence>
<accession>Q6P734</accession>
<organism>
    <name type="scientific">Rattus norvegicus</name>
    <name type="common">Rat</name>
    <dbReference type="NCBI Taxonomy" id="10116"/>
    <lineage>
        <taxon>Eukaryota</taxon>
        <taxon>Metazoa</taxon>
        <taxon>Chordata</taxon>
        <taxon>Craniata</taxon>
        <taxon>Vertebrata</taxon>
        <taxon>Euteleostomi</taxon>
        <taxon>Mammalia</taxon>
        <taxon>Eutheria</taxon>
        <taxon>Euarchontoglires</taxon>
        <taxon>Glires</taxon>
        <taxon>Rodentia</taxon>
        <taxon>Myomorpha</taxon>
        <taxon>Muroidea</taxon>
        <taxon>Muridae</taxon>
        <taxon>Murinae</taxon>
        <taxon>Rattus</taxon>
    </lineage>
</organism>
<dbReference type="EMBL" id="BC061860">
    <property type="protein sequence ID" value="AAH61860.1"/>
    <property type="molecule type" value="mRNA"/>
</dbReference>
<dbReference type="RefSeq" id="NP_001416777.1">
    <property type="nucleotide sequence ID" value="NM_001429848.1"/>
</dbReference>
<dbReference type="RefSeq" id="NP_954524.1">
    <property type="nucleotide sequence ID" value="NM_199093.3"/>
</dbReference>
<dbReference type="RefSeq" id="XP_006234509.1">
    <property type="nucleotide sequence ID" value="XM_006234447.2"/>
</dbReference>
<dbReference type="SMR" id="Q6P734"/>
<dbReference type="FunCoup" id="Q6P734">
    <property type="interactions" value="239"/>
</dbReference>
<dbReference type="STRING" id="10116.ENSRNOP00000009817"/>
<dbReference type="GlyCosmos" id="Q6P734">
    <property type="glycosylation" value="5 sites, No reported glycans"/>
</dbReference>
<dbReference type="GlyGen" id="Q6P734">
    <property type="glycosylation" value="5 sites"/>
</dbReference>
<dbReference type="PhosphoSitePlus" id="Q6P734"/>
<dbReference type="PaxDb" id="10116-ENSRNOP00000009817"/>
<dbReference type="Ensembl" id="ENSRNOT00000009817.5">
    <property type="protein sequence ID" value="ENSRNOP00000009817.3"/>
    <property type="gene ID" value="ENSRNOG00000007457.5"/>
</dbReference>
<dbReference type="GeneID" id="295703"/>
<dbReference type="KEGG" id="rno:295703"/>
<dbReference type="UCSC" id="RGD:735225">
    <property type="organism name" value="rat"/>
</dbReference>
<dbReference type="AGR" id="RGD:735225"/>
<dbReference type="CTD" id="710"/>
<dbReference type="RGD" id="735225">
    <property type="gene designation" value="Serping1"/>
</dbReference>
<dbReference type="eggNOG" id="KOG2392">
    <property type="taxonomic scope" value="Eukaryota"/>
</dbReference>
<dbReference type="GeneTree" id="ENSGT00940000159681"/>
<dbReference type="HOGENOM" id="CLU_023330_3_0_1"/>
<dbReference type="InParanoid" id="Q6P734"/>
<dbReference type="OMA" id="FELSSCT"/>
<dbReference type="OrthoDB" id="85552at9989"/>
<dbReference type="PhylomeDB" id="Q6P734"/>
<dbReference type="TreeFam" id="TF317350"/>
<dbReference type="Reactome" id="R-RNO-114608">
    <property type="pathway name" value="Platelet degranulation"/>
</dbReference>
<dbReference type="Reactome" id="R-RNO-140837">
    <property type="pathway name" value="Intrinsic Pathway of Fibrin Clot Formation"/>
</dbReference>
<dbReference type="Reactome" id="R-RNO-977606">
    <property type="pathway name" value="Regulation of Complement cascade"/>
</dbReference>
<dbReference type="PRO" id="PR:Q6P734"/>
<dbReference type="Proteomes" id="UP000002494">
    <property type="component" value="Chromosome 3"/>
</dbReference>
<dbReference type="Bgee" id="ENSRNOG00000007457">
    <property type="expression patterns" value="Expressed in liver and 19 other cell types or tissues"/>
</dbReference>
<dbReference type="GO" id="GO:0005615">
    <property type="term" value="C:extracellular space"/>
    <property type="evidence" value="ECO:0000314"/>
    <property type="project" value="RGD"/>
</dbReference>
<dbReference type="GO" id="GO:0001848">
    <property type="term" value="F:complement binding"/>
    <property type="evidence" value="ECO:0000266"/>
    <property type="project" value="RGD"/>
</dbReference>
<dbReference type="GO" id="GO:0004867">
    <property type="term" value="F:serine-type endopeptidase inhibitor activity"/>
    <property type="evidence" value="ECO:0000250"/>
    <property type="project" value="UniProtKB"/>
</dbReference>
<dbReference type="GO" id="GO:0007596">
    <property type="term" value="P:blood coagulation"/>
    <property type="evidence" value="ECO:0007669"/>
    <property type="project" value="UniProtKB-KW"/>
</dbReference>
<dbReference type="GO" id="GO:0006958">
    <property type="term" value="P:complement activation, classical pathway"/>
    <property type="evidence" value="ECO:0007669"/>
    <property type="project" value="UniProtKB-KW"/>
</dbReference>
<dbReference type="GO" id="GO:0042730">
    <property type="term" value="P:fibrinolysis"/>
    <property type="evidence" value="ECO:0007669"/>
    <property type="project" value="UniProtKB-KW"/>
</dbReference>
<dbReference type="GO" id="GO:0045087">
    <property type="term" value="P:innate immune response"/>
    <property type="evidence" value="ECO:0007669"/>
    <property type="project" value="UniProtKB-KW"/>
</dbReference>
<dbReference type="GO" id="GO:0001869">
    <property type="term" value="P:negative regulation of complement activation, lectin pathway"/>
    <property type="evidence" value="ECO:0000250"/>
    <property type="project" value="UniProtKB"/>
</dbReference>
<dbReference type="CDD" id="cd02050">
    <property type="entry name" value="serpinG1_C1-INH"/>
    <property type="match status" value="1"/>
</dbReference>
<dbReference type="FunFam" id="3.30.497.10:FF:000013">
    <property type="entry name" value="Serpin family G member 1"/>
    <property type="match status" value="1"/>
</dbReference>
<dbReference type="Gene3D" id="2.30.39.10">
    <property type="entry name" value="Alpha-1-antitrypsin, domain 1"/>
    <property type="match status" value="1"/>
</dbReference>
<dbReference type="Gene3D" id="3.30.497.10">
    <property type="entry name" value="Antithrombin, subunit I, domain 2"/>
    <property type="match status" value="1"/>
</dbReference>
<dbReference type="InterPro" id="IPR023795">
    <property type="entry name" value="Serpin_CS"/>
</dbReference>
<dbReference type="InterPro" id="IPR023796">
    <property type="entry name" value="Serpin_dom"/>
</dbReference>
<dbReference type="InterPro" id="IPR000215">
    <property type="entry name" value="Serpin_fam"/>
</dbReference>
<dbReference type="InterPro" id="IPR036186">
    <property type="entry name" value="Serpin_sf"/>
</dbReference>
<dbReference type="InterPro" id="IPR042178">
    <property type="entry name" value="Serpin_sf_1"/>
</dbReference>
<dbReference type="InterPro" id="IPR042185">
    <property type="entry name" value="Serpin_sf_2"/>
</dbReference>
<dbReference type="PANTHER" id="PTHR11461:SF159">
    <property type="entry name" value="PLASMA PROTEASE C1 INHIBITOR"/>
    <property type="match status" value="1"/>
</dbReference>
<dbReference type="PANTHER" id="PTHR11461">
    <property type="entry name" value="SERINE PROTEASE INHIBITOR, SERPIN"/>
    <property type="match status" value="1"/>
</dbReference>
<dbReference type="Pfam" id="PF00079">
    <property type="entry name" value="Serpin"/>
    <property type="match status" value="1"/>
</dbReference>
<dbReference type="SMART" id="SM00093">
    <property type="entry name" value="SERPIN"/>
    <property type="match status" value="1"/>
</dbReference>
<dbReference type="SUPFAM" id="SSF56574">
    <property type="entry name" value="Serpins"/>
    <property type="match status" value="1"/>
</dbReference>
<dbReference type="PROSITE" id="PS00284">
    <property type="entry name" value="SERPIN"/>
    <property type="match status" value="1"/>
</dbReference>
<feature type="signal peptide" evidence="1">
    <location>
        <begin position="1"/>
        <end position="22"/>
    </location>
</feature>
<feature type="chain" id="PRO_0000248966" description="Plasma protease C1 inhibitor">
    <location>
        <begin position="23"/>
        <end position="504"/>
    </location>
</feature>
<feature type="region of interest" description="Disordered" evidence="4">
    <location>
        <begin position="23"/>
        <end position="75"/>
    </location>
</feature>
<feature type="region of interest" description="Disordered" evidence="4">
    <location>
        <begin position="94"/>
        <end position="132"/>
    </location>
</feature>
<feature type="compositionally biased region" description="Polar residues" evidence="4">
    <location>
        <begin position="24"/>
        <end position="33"/>
    </location>
</feature>
<feature type="compositionally biased region" description="Basic and acidic residues" evidence="4">
    <location>
        <begin position="40"/>
        <end position="55"/>
    </location>
</feature>
<feature type="compositionally biased region" description="Polar residues" evidence="4">
    <location>
        <begin position="58"/>
        <end position="75"/>
    </location>
</feature>
<feature type="compositionally biased region" description="Low complexity" evidence="4">
    <location>
        <begin position="100"/>
        <end position="125"/>
    </location>
</feature>
<feature type="site" description="Reactive bond for chymotrypsin" evidence="1">
    <location>
        <begin position="469"/>
        <end position="470"/>
    </location>
</feature>
<feature type="site" description="Reactive bond" evidence="1">
    <location>
        <begin position="470"/>
        <end position="471"/>
    </location>
</feature>
<feature type="glycosylation site" description="N-linked (GlcNAc...) asparagine" evidence="3">
    <location>
        <position position="75"/>
    </location>
</feature>
<feature type="glycosylation site" description="N-linked (GlcNAc...) asparagine" evidence="3">
    <location>
        <position position="83"/>
    </location>
</feature>
<feature type="glycosylation site" description="N-linked (GlcNAc...) asparagine" evidence="3">
    <location>
        <position position="107"/>
    </location>
</feature>
<feature type="glycosylation site" description="N-linked (GlcNAc...) asparagine" evidence="3">
    <location>
        <position position="243"/>
    </location>
</feature>
<feature type="glycosylation site" description="N-linked (GlcNAc...) asparagine" evidence="3">
    <location>
        <position position="356"/>
    </location>
</feature>
<keyword id="KW-0094">Blood coagulation</keyword>
<keyword id="KW-0280">Fibrinolysis</keyword>
<keyword id="KW-0325">Glycoprotein</keyword>
<keyword id="KW-0356">Hemostasis</keyword>
<keyword id="KW-0646">Protease inhibitor</keyword>
<keyword id="KW-1185">Reference proteome</keyword>
<keyword id="KW-0964">Secreted</keyword>
<keyword id="KW-0722">Serine protease inhibitor</keyword>
<keyword id="KW-0732">Signal</keyword>
<protein>
    <recommendedName>
        <fullName>Plasma protease C1 inhibitor</fullName>
        <shortName>C1 Inh</shortName>
        <shortName>C1Inh</shortName>
    </recommendedName>
    <alternativeName>
        <fullName>C1 esterase inhibitor</fullName>
    </alternativeName>
    <alternativeName>
        <fullName>C1-inhibiting factor</fullName>
    </alternativeName>
    <alternativeName>
        <fullName>Serpin G1</fullName>
    </alternativeName>
</protein>
<evidence type="ECO:0000250" key="1"/>
<evidence type="ECO:0000250" key="2">
    <source>
        <dbReference type="UniProtKB" id="P05155"/>
    </source>
</evidence>
<evidence type="ECO:0000255" key="3"/>
<evidence type="ECO:0000256" key="4">
    <source>
        <dbReference type="SAM" id="MobiDB-lite"/>
    </source>
</evidence>
<evidence type="ECO:0000305" key="5"/>
<name>IC1_RAT</name>